<proteinExistence type="inferred from homology"/>
<comment type="function">
    <text evidence="1">Essential cell division protein. May link together the upstream cell division proteins, which are predominantly cytoplasmic, with the downstream cell division proteins, which are predominantly periplasmic.</text>
</comment>
<comment type="subunit">
    <text evidence="1">Part of a complex composed of FtsB, FtsL and FtsQ.</text>
</comment>
<comment type="subcellular location">
    <subcellularLocation>
        <location evidence="1">Cell inner membrane</location>
        <topology evidence="1">Single-pass type II membrane protein</topology>
    </subcellularLocation>
    <text evidence="1">Localizes to the division septum.</text>
</comment>
<comment type="similarity">
    <text evidence="1">Belongs to the FtsB family.</text>
</comment>
<reference key="1">
    <citation type="journal article" date="2006" name="Nat. Biotechnol.">
        <title>Complete genome of the mutualistic, N2-fixing grass endophyte Azoarcus sp. strain BH72.</title>
        <authorList>
            <person name="Krause A."/>
            <person name="Ramakumar A."/>
            <person name="Bartels D."/>
            <person name="Battistoni F."/>
            <person name="Bekel T."/>
            <person name="Boch J."/>
            <person name="Boehm M."/>
            <person name="Friedrich F."/>
            <person name="Hurek T."/>
            <person name="Krause L."/>
            <person name="Linke B."/>
            <person name="McHardy A.C."/>
            <person name="Sarkar A."/>
            <person name="Schneiker S."/>
            <person name="Syed A.A."/>
            <person name="Thauer R."/>
            <person name="Vorhoelter F.-J."/>
            <person name="Weidner S."/>
            <person name="Puehler A."/>
            <person name="Reinhold-Hurek B."/>
            <person name="Kaiser O."/>
            <person name="Goesmann A."/>
        </authorList>
    </citation>
    <scope>NUCLEOTIDE SEQUENCE [LARGE SCALE GENOMIC DNA]</scope>
    <source>
        <strain>BH72</strain>
    </source>
</reference>
<gene>
    <name evidence="1" type="primary">ftsB</name>
    <name type="ordered locus">azo2143</name>
</gene>
<keyword id="KW-0131">Cell cycle</keyword>
<keyword id="KW-0132">Cell division</keyword>
<keyword id="KW-0997">Cell inner membrane</keyword>
<keyword id="KW-1003">Cell membrane</keyword>
<keyword id="KW-0175">Coiled coil</keyword>
<keyword id="KW-0472">Membrane</keyword>
<keyword id="KW-1185">Reference proteome</keyword>
<keyword id="KW-0812">Transmembrane</keyword>
<keyword id="KW-1133">Transmembrane helix</keyword>
<name>FTSB_AZOSB</name>
<accession>A1K7F5</accession>
<dbReference type="EMBL" id="AM406670">
    <property type="protein sequence ID" value="CAL94760.1"/>
    <property type="molecule type" value="Genomic_DNA"/>
</dbReference>
<dbReference type="RefSeq" id="WP_011765874.1">
    <property type="nucleotide sequence ID" value="NC_008702.1"/>
</dbReference>
<dbReference type="SMR" id="A1K7F5"/>
<dbReference type="STRING" id="62928.azo2143"/>
<dbReference type="KEGG" id="aoa:dqs_2276"/>
<dbReference type="KEGG" id="azo:azo2143"/>
<dbReference type="eggNOG" id="COG2919">
    <property type="taxonomic scope" value="Bacteria"/>
</dbReference>
<dbReference type="HOGENOM" id="CLU_134863_5_0_4"/>
<dbReference type="OrthoDB" id="7061211at2"/>
<dbReference type="Proteomes" id="UP000002588">
    <property type="component" value="Chromosome"/>
</dbReference>
<dbReference type="GO" id="GO:0032153">
    <property type="term" value="C:cell division site"/>
    <property type="evidence" value="ECO:0007669"/>
    <property type="project" value="UniProtKB-UniRule"/>
</dbReference>
<dbReference type="GO" id="GO:0030428">
    <property type="term" value="C:cell septum"/>
    <property type="evidence" value="ECO:0007669"/>
    <property type="project" value="TreeGrafter"/>
</dbReference>
<dbReference type="GO" id="GO:0005886">
    <property type="term" value="C:plasma membrane"/>
    <property type="evidence" value="ECO:0007669"/>
    <property type="project" value="UniProtKB-SubCell"/>
</dbReference>
<dbReference type="GO" id="GO:0043093">
    <property type="term" value="P:FtsZ-dependent cytokinesis"/>
    <property type="evidence" value="ECO:0007669"/>
    <property type="project" value="UniProtKB-UniRule"/>
</dbReference>
<dbReference type="HAMAP" id="MF_00599">
    <property type="entry name" value="FtsB"/>
    <property type="match status" value="1"/>
</dbReference>
<dbReference type="InterPro" id="IPR023081">
    <property type="entry name" value="Cell_div_FtsB"/>
</dbReference>
<dbReference type="InterPro" id="IPR007060">
    <property type="entry name" value="FtsL/DivIC"/>
</dbReference>
<dbReference type="NCBIfam" id="NF002058">
    <property type="entry name" value="PRK00888.1"/>
    <property type="match status" value="1"/>
</dbReference>
<dbReference type="PANTHER" id="PTHR37485">
    <property type="entry name" value="CELL DIVISION PROTEIN FTSB"/>
    <property type="match status" value="1"/>
</dbReference>
<dbReference type="PANTHER" id="PTHR37485:SF1">
    <property type="entry name" value="CELL DIVISION PROTEIN FTSB"/>
    <property type="match status" value="1"/>
</dbReference>
<dbReference type="Pfam" id="PF04977">
    <property type="entry name" value="DivIC"/>
    <property type="match status" value="1"/>
</dbReference>
<feature type="chain" id="PRO_1000025687" description="Cell division protein FtsB">
    <location>
        <begin position="1"/>
        <end position="91"/>
    </location>
</feature>
<feature type="topological domain" description="Cytoplasmic" evidence="1">
    <location>
        <begin position="1"/>
        <end position="3"/>
    </location>
</feature>
<feature type="transmembrane region" description="Helical" evidence="1">
    <location>
        <begin position="4"/>
        <end position="21"/>
    </location>
</feature>
<feature type="topological domain" description="Periplasmic" evidence="1">
    <location>
        <begin position="22"/>
        <end position="91"/>
    </location>
</feature>
<feature type="coiled-coil region" evidence="1">
    <location>
        <begin position="28"/>
        <end position="72"/>
    </location>
</feature>
<protein>
    <recommendedName>
        <fullName evidence="1">Cell division protein FtsB</fullName>
    </recommendedName>
</protein>
<organism>
    <name type="scientific">Azoarcus sp. (strain BH72)</name>
    <dbReference type="NCBI Taxonomy" id="418699"/>
    <lineage>
        <taxon>Bacteria</taxon>
        <taxon>Pseudomonadati</taxon>
        <taxon>Pseudomonadota</taxon>
        <taxon>Betaproteobacteria</taxon>
        <taxon>Rhodocyclales</taxon>
        <taxon>Zoogloeaceae</taxon>
        <taxon>Azoarcus</taxon>
    </lineage>
</organism>
<sequence length="91" mass="10679">MRWPVIILAVLVVVLQYPLWLGKGGWLRVWEVDRKLHEQREENTRLEERNAGLDAEVRDLKSGNEAIEERARLELGLTKPNEIFVQVPQKH</sequence>
<evidence type="ECO:0000255" key="1">
    <source>
        <dbReference type="HAMAP-Rule" id="MF_00599"/>
    </source>
</evidence>